<dbReference type="EC" id="6.3.4.20" evidence="1"/>
<dbReference type="EMBL" id="CP000800">
    <property type="protein sequence ID" value="ABV18274.1"/>
    <property type="molecule type" value="Genomic_DNA"/>
</dbReference>
<dbReference type="RefSeq" id="WP_000817229.1">
    <property type="nucleotide sequence ID" value="NC_009801.1"/>
</dbReference>
<dbReference type="SMR" id="A7ZIK2"/>
<dbReference type="GeneID" id="93777006"/>
<dbReference type="KEGG" id="ecw:EcE24377A_0480"/>
<dbReference type="HOGENOM" id="CLU_081854_0_0_6"/>
<dbReference type="UniPathway" id="UPA00391"/>
<dbReference type="Proteomes" id="UP000001122">
    <property type="component" value="Chromosome"/>
</dbReference>
<dbReference type="GO" id="GO:0005524">
    <property type="term" value="F:ATP binding"/>
    <property type="evidence" value="ECO:0007669"/>
    <property type="project" value="UniProtKB-UniRule"/>
</dbReference>
<dbReference type="GO" id="GO:0016879">
    <property type="term" value="F:ligase activity, forming carbon-nitrogen bonds"/>
    <property type="evidence" value="ECO:0007669"/>
    <property type="project" value="UniProtKB-UniRule"/>
</dbReference>
<dbReference type="GO" id="GO:0008270">
    <property type="term" value="F:zinc ion binding"/>
    <property type="evidence" value="ECO:0007669"/>
    <property type="project" value="UniProtKB-UniRule"/>
</dbReference>
<dbReference type="GO" id="GO:0008616">
    <property type="term" value="P:queuosine biosynthetic process"/>
    <property type="evidence" value="ECO:0007669"/>
    <property type="project" value="UniProtKB-UniRule"/>
</dbReference>
<dbReference type="CDD" id="cd01995">
    <property type="entry name" value="QueC-like"/>
    <property type="match status" value="1"/>
</dbReference>
<dbReference type="FunFam" id="3.40.50.620:FF:000017">
    <property type="entry name" value="7-cyano-7-deazaguanine synthase"/>
    <property type="match status" value="1"/>
</dbReference>
<dbReference type="Gene3D" id="3.40.50.620">
    <property type="entry name" value="HUPs"/>
    <property type="match status" value="1"/>
</dbReference>
<dbReference type="HAMAP" id="MF_01633">
    <property type="entry name" value="QueC"/>
    <property type="match status" value="1"/>
</dbReference>
<dbReference type="InterPro" id="IPR018317">
    <property type="entry name" value="QueC"/>
</dbReference>
<dbReference type="InterPro" id="IPR014729">
    <property type="entry name" value="Rossmann-like_a/b/a_fold"/>
</dbReference>
<dbReference type="NCBIfam" id="TIGR00364">
    <property type="entry name" value="7-cyano-7-deazaguanine synthase QueC"/>
    <property type="match status" value="1"/>
</dbReference>
<dbReference type="NCBIfam" id="NF008317">
    <property type="entry name" value="PRK11106.1"/>
    <property type="match status" value="1"/>
</dbReference>
<dbReference type="PANTHER" id="PTHR42914">
    <property type="entry name" value="7-CYANO-7-DEAZAGUANINE SYNTHASE"/>
    <property type="match status" value="1"/>
</dbReference>
<dbReference type="PANTHER" id="PTHR42914:SF1">
    <property type="entry name" value="7-CYANO-7-DEAZAGUANINE SYNTHASE"/>
    <property type="match status" value="1"/>
</dbReference>
<dbReference type="Pfam" id="PF06508">
    <property type="entry name" value="QueC"/>
    <property type="match status" value="1"/>
</dbReference>
<dbReference type="PIRSF" id="PIRSF006293">
    <property type="entry name" value="ExsB"/>
    <property type="match status" value="1"/>
</dbReference>
<dbReference type="SUPFAM" id="SSF52402">
    <property type="entry name" value="Adenine nucleotide alpha hydrolases-like"/>
    <property type="match status" value="1"/>
</dbReference>
<protein>
    <recommendedName>
        <fullName evidence="1">7-cyano-7-deazaguanine synthase</fullName>
        <ecNumber evidence="1">6.3.4.20</ecNumber>
    </recommendedName>
    <alternativeName>
        <fullName evidence="1">7-cyano-7-carbaguanine synthase</fullName>
    </alternativeName>
    <alternativeName>
        <fullName evidence="1">PreQ(0) synthase</fullName>
    </alternativeName>
    <alternativeName>
        <fullName evidence="1">Queuosine biosynthesis protein QueC</fullName>
    </alternativeName>
</protein>
<keyword id="KW-0067">ATP-binding</keyword>
<keyword id="KW-0436">Ligase</keyword>
<keyword id="KW-0479">Metal-binding</keyword>
<keyword id="KW-0547">Nucleotide-binding</keyword>
<keyword id="KW-0671">Queuosine biosynthesis</keyword>
<keyword id="KW-1185">Reference proteome</keyword>
<keyword id="KW-0862">Zinc</keyword>
<reference key="1">
    <citation type="journal article" date="2008" name="J. Bacteriol.">
        <title>The pangenome structure of Escherichia coli: comparative genomic analysis of E. coli commensal and pathogenic isolates.</title>
        <authorList>
            <person name="Rasko D.A."/>
            <person name="Rosovitz M.J."/>
            <person name="Myers G.S.A."/>
            <person name="Mongodin E.F."/>
            <person name="Fricke W.F."/>
            <person name="Gajer P."/>
            <person name="Crabtree J."/>
            <person name="Sebaihia M."/>
            <person name="Thomson N.R."/>
            <person name="Chaudhuri R."/>
            <person name="Henderson I.R."/>
            <person name="Sperandio V."/>
            <person name="Ravel J."/>
        </authorList>
    </citation>
    <scope>NUCLEOTIDE SEQUENCE [LARGE SCALE GENOMIC DNA]</scope>
    <source>
        <strain>E24377A / ETEC</strain>
    </source>
</reference>
<proteinExistence type="inferred from homology"/>
<accession>A7ZIK2</accession>
<organism>
    <name type="scientific">Escherichia coli O139:H28 (strain E24377A / ETEC)</name>
    <dbReference type="NCBI Taxonomy" id="331111"/>
    <lineage>
        <taxon>Bacteria</taxon>
        <taxon>Pseudomonadati</taxon>
        <taxon>Pseudomonadota</taxon>
        <taxon>Gammaproteobacteria</taxon>
        <taxon>Enterobacterales</taxon>
        <taxon>Enterobacteriaceae</taxon>
        <taxon>Escherichia</taxon>
    </lineage>
</organism>
<gene>
    <name evidence="1" type="primary">queC</name>
    <name type="ordered locus">EcE24377A_0480</name>
</gene>
<evidence type="ECO:0000255" key="1">
    <source>
        <dbReference type="HAMAP-Rule" id="MF_01633"/>
    </source>
</evidence>
<feature type="chain" id="PRO_1000069766" description="7-cyano-7-deazaguanine synthase">
    <location>
        <begin position="1"/>
        <end position="231"/>
    </location>
</feature>
<feature type="binding site" evidence="1">
    <location>
        <begin position="8"/>
        <end position="18"/>
    </location>
    <ligand>
        <name>ATP</name>
        <dbReference type="ChEBI" id="CHEBI:30616"/>
    </ligand>
</feature>
<feature type="binding site" evidence="1">
    <location>
        <position position="188"/>
    </location>
    <ligand>
        <name>Zn(2+)</name>
        <dbReference type="ChEBI" id="CHEBI:29105"/>
    </ligand>
</feature>
<feature type="binding site" evidence="1">
    <location>
        <position position="197"/>
    </location>
    <ligand>
        <name>Zn(2+)</name>
        <dbReference type="ChEBI" id="CHEBI:29105"/>
    </ligand>
</feature>
<feature type="binding site" evidence="1">
    <location>
        <position position="200"/>
    </location>
    <ligand>
        <name>Zn(2+)</name>
        <dbReference type="ChEBI" id="CHEBI:29105"/>
    </ligand>
</feature>
<feature type="binding site" evidence="1">
    <location>
        <position position="203"/>
    </location>
    <ligand>
        <name>Zn(2+)</name>
        <dbReference type="ChEBI" id="CHEBI:29105"/>
    </ligand>
</feature>
<comment type="function">
    <text evidence="1">Catalyzes the ATP-dependent conversion of 7-carboxy-7-deazaguanine (CDG) to 7-cyano-7-deazaguanine (preQ(0)).</text>
</comment>
<comment type="catalytic activity">
    <reaction evidence="1">
        <text>7-carboxy-7-deazaguanine + NH4(+) + ATP = 7-cyano-7-deazaguanine + ADP + phosphate + H2O + H(+)</text>
        <dbReference type="Rhea" id="RHEA:27982"/>
        <dbReference type="ChEBI" id="CHEBI:15377"/>
        <dbReference type="ChEBI" id="CHEBI:15378"/>
        <dbReference type="ChEBI" id="CHEBI:28938"/>
        <dbReference type="ChEBI" id="CHEBI:30616"/>
        <dbReference type="ChEBI" id="CHEBI:43474"/>
        <dbReference type="ChEBI" id="CHEBI:45075"/>
        <dbReference type="ChEBI" id="CHEBI:61036"/>
        <dbReference type="ChEBI" id="CHEBI:456216"/>
        <dbReference type="EC" id="6.3.4.20"/>
    </reaction>
</comment>
<comment type="cofactor">
    <cofactor evidence="1">
        <name>Zn(2+)</name>
        <dbReference type="ChEBI" id="CHEBI:29105"/>
    </cofactor>
    <text evidence="1">Binds 1 zinc ion per subunit.</text>
</comment>
<comment type="pathway">
    <text evidence="1">Purine metabolism; 7-cyano-7-deazaguanine biosynthesis.</text>
</comment>
<comment type="similarity">
    <text evidence="1">Belongs to the QueC family.</text>
</comment>
<name>QUEC_ECO24</name>
<sequence>MKRAVVVFSGGQDSTTCLVQALQQYDEVHCVTFDYGQRHRAEIDVARELALKLGARAHKVLDVTLLNELAVSSLTRDSIPVPDYEPEADGIPNTFVPGRNILFLTLAAIYAYQVKAEAVITGVCETDFSGYPDCRDEFVKALNHAVSLGMAKDIRFETPLMWIDKAETWALADYYGKLDLVRNETLTCYNGIKGDGCGHCAACNLRANGLNHYLADKPTVMAAMKQKTGLR</sequence>